<reference key="1">
    <citation type="journal article" date="1998" name="Nat. Genet.">
        <title>Human deltex is a conserved regulator of Notch signalling.</title>
        <authorList>
            <person name="Matsuno K."/>
            <person name="Eastman D."/>
            <person name="Mitsiades T."/>
            <person name="Quinn A.M."/>
            <person name="Carcanciu M.L."/>
            <person name="Ordentlich P."/>
            <person name="Kadesch T."/>
            <person name="Artavanis-Tsakonas S."/>
        </authorList>
    </citation>
    <scope>NUCLEOTIDE SEQUENCE [MRNA]</scope>
    <scope>FUNCTION</scope>
    <scope>SUBCELLULAR LOCATION</scope>
    <scope>TISSUE SPECIFICITY</scope>
    <scope>INTERACTION WITH NOTCH1</scope>
    <source>
        <tissue>Fetal brain</tissue>
    </source>
</reference>
<reference key="2">
    <citation type="journal article" date="2004" name="Genome Res.">
        <title>The status, quality, and expansion of the NIH full-length cDNA project: the Mammalian Gene Collection (MGC).</title>
        <authorList>
            <consortium name="The MGC Project Team"/>
        </authorList>
    </citation>
    <scope>NUCLEOTIDE SEQUENCE [LARGE SCALE MRNA]</scope>
    <source>
        <tissue>Lymph</tissue>
    </source>
</reference>
<reference key="3">
    <citation type="journal article" date="2002" name="Immunity">
        <title>Deltex1 redirects lymphoid progenitors to the B cell lineage by antagonizing Notch1.</title>
        <authorList>
            <person name="Izon D.J."/>
            <person name="Aster J.C."/>
            <person name="He Y."/>
            <person name="Weng A."/>
            <person name="Karnell F.G."/>
            <person name="Patriub V."/>
            <person name="Xu L."/>
            <person name="Bakkour S."/>
            <person name="Rodriguez C."/>
            <person name="Allman D."/>
            <person name="Pear W.S."/>
        </authorList>
    </citation>
    <scope>FUNCTION</scope>
</reference>
<reference key="4">
    <citation type="journal article" date="2001" name="J. Biol. Chem.">
        <title>Role of Deltex-1 as a transcriptional regulator downstream of the Notch receptor.</title>
        <authorList>
            <person name="Yamamoto N."/>
            <person name="Yamamoto S."/>
            <person name="Inagaki F."/>
            <person name="Kawaichi M."/>
            <person name="Fukamizu A."/>
            <person name="Kishi N."/>
            <person name="Matsuno K."/>
            <person name="Nakamura K."/>
            <person name="Weinmaster G."/>
            <person name="Okano H."/>
            <person name="Nakafuku M."/>
        </authorList>
    </citation>
    <scope>FUNCTION</scope>
    <scope>SUBCELLULAR LOCATION</scope>
    <scope>INTERACTION WITH EP300</scope>
</reference>
<reference key="5">
    <citation type="journal article" date="2003" name="Immunity">
        <title>Notch2 is preferentially expressed in mature B cells and indispensable for marginal zone B lineage development.</title>
        <authorList>
            <person name="Saito T."/>
            <person name="Chiba S."/>
            <person name="Ichikawa M."/>
            <person name="Kunisato A."/>
            <person name="Asai T."/>
            <person name="Shimizu K."/>
            <person name="Yamaguchi T."/>
            <person name="Yamamoto G."/>
            <person name="Seo S."/>
            <person name="Kumano K."/>
            <person name="Nakagami-Yamaguchi E."/>
            <person name="Hamada Y."/>
            <person name="Aizawa S."/>
            <person name="Hirai H."/>
        </authorList>
    </citation>
    <scope>TISSUE SPECIFICITY</scope>
    <scope>INDUCTION</scope>
</reference>
<reference key="6">
    <citation type="journal article" date="2003" name="J. Biol. Chem.">
        <title>The BAL-binding protein BBAP and related Deltex family members exhibit ubiquitin-protein isopeptide ligase activity.</title>
        <authorList>
            <person name="Takeyama K."/>
            <person name="Aguiar R.C.T."/>
            <person name="Gu L."/>
            <person name="He C."/>
            <person name="Freeman G.J."/>
            <person name="Kutok J.L."/>
            <person name="Aster J.C."/>
            <person name="Shipp M.A."/>
        </authorList>
    </citation>
    <scope>IN VITRO UBIQUITIN LIGASE ACTIVITY</scope>
    <scope>SUBUNIT</scope>
    <scope>INTERACTION WITH BBAP</scope>
</reference>
<reference key="7">
    <citation type="journal article" date="2006" name="EMBO Rep.">
        <title>Itch/AIP4 mediates Deltex degradation through the formation of K29-linked polyubiquitin chains.</title>
        <authorList>
            <person name="Chastagner P."/>
            <person name="Israel A."/>
            <person name="Brou C."/>
        </authorList>
    </citation>
    <scope>SUBCELLULAR LOCATION</scope>
    <scope>INTERACTION WITH ITCH</scope>
    <scope>UBIQUITINATION BY ITCH</scope>
</reference>
<reference key="8">
    <citation type="journal article" date="2010" name="PLoS Biol.">
        <title>The translation initiation factor 3f (eIF3f) exhibits a deubiquitinase activity regulating Notch activation.</title>
        <authorList>
            <person name="Moretti J."/>
            <person name="Chastagner P."/>
            <person name="Gastaldello S."/>
            <person name="Heuss S.F."/>
            <person name="Dirac A.M."/>
            <person name="Bernards R."/>
            <person name="Masucci M.G."/>
            <person name="Israel A."/>
            <person name="Brou C."/>
        </authorList>
    </citation>
    <scope>INTERACTION WITH NOTCH1 AND EIF3F</scope>
</reference>
<name>DTX1_HUMAN</name>
<feature type="chain" id="PRO_0000219080" description="E3 ubiquitin-protein ligase DTX1">
    <location>
        <begin position="1"/>
        <end position="620"/>
    </location>
</feature>
<feature type="domain" description="WWE 1" evidence="5">
    <location>
        <begin position="14"/>
        <end position="94"/>
    </location>
</feature>
<feature type="domain" description="WWE 2" evidence="5">
    <location>
        <begin position="95"/>
        <end position="171"/>
    </location>
</feature>
<feature type="zinc finger region" description="RING-type" evidence="4">
    <location>
        <begin position="411"/>
        <end position="472"/>
    </location>
</feature>
<feature type="region of interest" description="Disordered" evidence="6">
    <location>
        <begin position="221"/>
        <end position="248"/>
    </location>
</feature>
<feature type="region of interest" description="Disordered" evidence="6">
    <location>
        <begin position="262"/>
        <end position="313"/>
    </location>
</feature>
<feature type="region of interest" description="Disordered" evidence="6">
    <location>
        <begin position="361"/>
        <end position="391"/>
    </location>
</feature>
<feature type="short sequence motif" description="SH3-binding" evidence="3">
    <location>
        <begin position="230"/>
        <end position="233"/>
    </location>
</feature>
<feature type="compositionally biased region" description="Pro residues" evidence="6">
    <location>
        <begin position="227"/>
        <end position="241"/>
    </location>
</feature>
<feature type="compositionally biased region" description="Pro residues" evidence="6">
    <location>
        <begin position="268"/>
        <end position="280"/>
    </location>
</feature>
<feature type="compositionally biased region" description="Polar residues" evidence="6">
    <location>
        <begin position="291"/>
        <end position="307"/>
    </location>
</feature>
<feature type="compositionally biased region" description="Basic residues" evidence="6">
    <location>
        <begin position="379"/>
        <end position="389"/>
    </location>
</feature>
<feature type="sequence conflict" description="In Ref. 1; AAC06246." evidence="14" ref="1">
    <original>W</original>
    <variation>C</variation>
    <location>
        <position position="30"/>
    </location>
</feature>
<feature type="sequence conflict" description="In Ref. 1; AAC06246." evidence="14" ref="1">
    <original>A</original>
    <variation>V</variation>
    <location>
        <position position="214"/>
    </location>
</feature>
<feature type="sequence conflict" description="In Ref. 1; AAC06246." evidence="14" ref="1">
    <original>A</original>
    <variation>V</variation>
    <location>
        <position position="217"/>
    </location>
</feature>
<feature type="sequence conflict" description="In Ref. 1; AAC06246." evidence="14" ref="1">
    <original>A</original>
    <variation>V</variation>
    <location>
        <position position="226"/>
    </location>
</feature>
<feature type="sequence conflict" description="In Ref. 1; AAC06246." evidence="14" ref="1">
    <original>A</original>
    <variation>G</variation>
    <location>
        <position position="618"/>
    </location>
</feature>
<feature type="strand" evidence="16">
    <location>
        <begin position="21"/>
        <end position="31"/>
    </location>
</feature>
<feature type="strand" evidence="16">
    <location>
        <begin position="37"/>
        <end position="39"/>
    </location>
</feature>
<feature type="helix" evidence="16">
    <location>
        <begin position="42"/>
        <end position="54"/>
    </location>
</feature>
<feature type="strand" evidence="16">
    <location>
        <begin position="59"/>
        <end position="61"/>
    </location>
</feature>
<feature type="helix" evidence="16">
    <location>
        <begin position="62"/>
        <end position="64"/>
    </location>
</feature>
<feature type="helix" evidence="16">
    <location>
        <begin position="67"/>
        <end position="69"/>
    </location>
</feature>
<feature type="strand" evidence="16">
    <location>
        <begin position="72"/>
        <end position="75"/>
    </location>
</feature>
<feature type="turn" evidence="16">
    <location>
        <begin position="76"/>
        <end position="79"/>
    </location>
</feature>
<feature type="strand" evidence="16">
    <location>
        <begin position="80"/>
        <end position="83"/>
    </location>
</feature>
<feature type="turn" evidence="16">
    <location>
        <begin position="84"/>
        <end position="86"/>
    </location>
</feature>
<feature type="strand" evidence="16">
    <location>
        <begin position="89"/>
        <end position="97"/>
    </location>
</feature>
<feature type="helix" evidence="16">
    <location>
        <begin position="102"/>
        <end position="105"/>
    </location>
</feature>
<feature type="strand" evidence="16">
    <location>
        <begin position="107"/>
        <end position="112"/>
    </location>
</feature>
<feature type="strand" evidence="16">
    <location>
        <begin position="118"/>
        <end position="120"/>
    </location>
</feature>
<feature type="helix" evidence="16">
    <location>
        <begin position="123"/>
        <end position="134"/>
    </location>
</feature>
<feature type="strand" evidence="16">
    <location>
        <begin position="138"/>
        <end position="141"/>
    </location>
</feature>
<feature type="helix" evidence="16">
    <location>
        <begin position="143"/>
        <end position="145"/>
    </location>
</feature>
<feature type="strand" evidence="16">
    <location>
        <begin position="149"/>
        <end position="152"/>
    </location>
</feature>
<feature type="turn" evidence="16">
    <location>
        <begin position="153"/>
        <end position="156"/>
    </location>
</feature>
<feature type="strand" evidence="16">
    <location>
        <begin position="157"/>
        <end position="160"/>
    </location>
</feature>
<feature type="turn" evidence="16">
    <location>
        <begin position="161"/>
        <end position="163"/>
    </location>
</feature>
<feature type="strand" evidence="16">
    <location>
        <begin position="166"/>
        <end position="173"/>
    </location>
</feature>
<feature type="strand" evidence="16">
    <location>
        <begin position="179"/>
        <end position="183"/>
    </location>
</feature>
<feature type="helix" evidence="15">
    <location>
        <begin position="392"/>
        <end position="399"/>
    </location>
</feature>
<feature type="strand" evidence="15">
    <location>
        <begin position="400"/>
        <end position="402"/>
    </location>
</feature>
<feature type="turn" evidence="15">
    <location>
        <begin position="412"/>
        <end position="414"/>
    </location>
</feature>
<feature type="helix" evidence="15">
    <location>
        <begin position="427"/>
        <end position="429"/>
    </location>
</feature>
<feature type="strand" evidence="15">
    <location>
        <begin position="438"/>
        <end position="441"/>
    </location>
</feature>
<feature type="turn" evidence="15">
    <location>
        <begin position="442"/>
        <end position="445"/>
    </location>
</feature>
<feature type="strand" evidence="15">
    <location>
        <begin position="446"/>
        <end position="449"/>
    </location>
</feature>
<feature type="helix" evidence="15">
    <location>
        <begin position="450"/>
        <end position="458"/>
    </location>
</feature>
<feature type="turn" evidence="15">
    <location>
        <begin position="459"/>
        <end position="461"/>
    </location>
</feature>
<feature type="turn" evidence="15">
    <location>
        <begin position="469"/>
        <end position="471"/>
    </location>
</feature>
<feature type="strand" evidence="15">
    <location>
        <begin position="474"/>
        <end position="476"/>
    </location>
</feature>
<feature type="strand" evidence="15">
    <location>
        <begin position="486"/>
        <end position="493"/>
    </location>
</feature>
<feature type="strand" evidence="15">
    <location>
        <begin position="504"/>
        <end position="510"/>
    </location>
</feature>
<feature type="strand" evidence="15">
    <location>
        <begin position="520"/>
        <end position="522"/>
    </location>
</feature>
<feature type="strand" evidence="15">
    <location>
        <begin position="525"/>
        <end position="528"/>
    </location>
</feature>
<feature type="strand" evidence="15">
    <location>
        <begin position="533"/>
        <end position="541"/>
    </location>
</feature>
<feature type="helix" evidence="15">
    <location>
        <begin position="542"/>
        <end position="556"/>
    </location>
</feature>
<feature type="strand" evidence="15">
    <location>
        <begin position="560"/>
        <end position="564"/>
    </location>
</feature>
<feature type="turn" evidence="15">
    <location>
        <begin position="567"/>
        <end position="569"/>
    </location>
</feature>
<feature type="strand" evidence="15">
    <location>
        <begin position="572"/>
        <end position="577"/>
    </location>
</feature>
<feature type="strand" evidence="15">
    <location>
        <begin position="585"/>
        <end position="587"/>
    </location>
</feature>
<feature type="strand" evidence="15">
    <location>
        <begin position="592"/>
        <end position="595"/>
    </location>
</feature>
<feature type="helix" evidence="15">
    <location>
        <begin position="600"/>
        <end position="610"/>
    </location>
</feature>
<evidence type="ECO:0000250" key="1"/>
<evidence type="ECO:0000250" key="2">
    <source>
        <dbReference type="UniProtKB" id="Q61010"/>
    </source>
</evidence>
<evidence type="ECO:0000255" key="3"/>
<evidence type="ECO:0000255" key="4">
    <source>
        <dbReference type="PROSITE-ProRule" id="PRU00175"/>
    </source>
</evidence>
<evidence type="ECO:0000255" key="5">
    <source>
        <dbReference type="PROSITE-ProRule" id="PRU00248"/>
    </source>
</evidence>
<evidence type="ECO:0000256" key="6">
    <source>
        <dbReference type="SAM" id="MobiDB-lite"/>
    </source>
</evidence>
<evidence type="ECO:0000269" key="7">
    <source>
    </source>
</evidence>
<evidence type="ECO:0000269" key="8">
    <source>
    </source>
</evidence>
<evidence type="ECO:0000269" key="9">
    <source>
    </source>
</evidence>
<evidence type="ECO:0000269" key="10">
    <source>
    </source>
</evidence>
<evidence type="ECO:0000269" key="11">
    <source>
    </source>
</evidence>
<evidence type="ECO:0000269" key="12">
    <source>
    </source>
</evidence>
<evidence type="ECO:0000269" key="13">
    <source>
    </source>
</evidence>
<evidence type="ECO:0000305" key="14"/>
<evidence type="ECO:0007829" key="15">
    <source>
        <dbReference type="PDB" id="6Y5P"/>
    </source>
</evidence>
<evidence type="ECO:0007829" key="16">
    <source>
        <dbReference type="PDB" id="8R5N"/>
    </source>
</evidence>
<sequence length="620" mass="67368">MSRPGHGGLMPVNGLGFPPQNVARVVVWEWLNEHSRWRPYTATVCHHIENVLKEDARGSVVLGQVDAQLVPYIIDLQSMHQFRQDTGTMRPVRRNFYDPSSAPGKGIVWEWENDGGAWTAYDMDICITIQNAYEKQHPWLDLSSLGFCYLIYFNSMSQMNRQTRRRRRLRRRLDLAYPLTVGSIPKSQSWPVGASSGQPCSCQQCLLVNSTRAASNAILASQRRKAPPAPPLPPPPPPGGPPGALAVRPSATFTGAALWAAPAAGPAEPAPPPGAPPRSPGAPGGARTPGQNNLNRPGPQRTTSVSARASIPPGVPALPVKNLNGTGPVHPALAGMTGILLCAAGLPVCLTRAPKPILHPPPVSKSDVKPVPGVPGVCRKTKKKHLKKSKNPEDVVRRYMQKVKNPPDEDCTICMERLVTASGYEGVLRHKGVRPELVGRLGRCGHMYHLLCLVAMYSNGNKDGSLQCPTCKAIYGEKTGTQPPGKMEFHLIPHSLPGFPDTQTIRIVYDIPTGIQGPEHPNPGKKFTARGFPRHCYLPNNEKGRKVLRLLITAWERRLIFTIGTSNTTGESDTVVWNEIHHKTEFGSNLTGHGYPDASYLDNVLAELTAQGVSEAAAKA</sequence>
<dbReference type="EC" id="2.3.2.27" evidence="2"/>
<dbReference type="EMBL" id="AF053700">
    <property type="protein sequence ID" value="AAC06246.1"/>
    <property type="molecule type" value="mRNA"/>
</dbReference>
<dbReference type="EMBL" id="BC005816">
    <property type="protein sequence ID" value="AAH05816.2"/>
    <property type="molecule type" value="mRNA"/>
</dbReference>
<dbReference type="EMBL" id="BC048216">
    <property type="protein sequence ID" value="AAH48216.1"/>
    <property type="molecule type" value="mRNA"/>
</dbReference>
<dbReference type="CCDS" id="CCDS9164.1"/>
<dbReference type="RefSeq" id="NP_004407.2">
    <property type="nucleotide sequence ID" value="NM_004416.2"/>
</dbReference>
<dbReference type="RefSeq" id="XP_011536311.1">
    <property type="nucleotide sequence ID" value="XM_011538009.2"/>
</dbReference>
<dbReference type="PDB" id="6Y5N">
    <property type="method" value="X-ray"/>
    <property type="resolution" value="1.88 A"/>
    <property type="chains" value="A/B=388-620"/>
</dbReference>
<dbReference type="PDB" id="6Y5P">
    <property type="method" value="X-ray"/>
    <property type="resolution" value="1.74 A"/>
    <property type="chains" value="A/B=388-620"/>
</dbReference>
<dbReference type="PDB" id="8R5N">
    <property type="method" value="X-ray"/>
    <property type="resolution" value="1.81 A"/>
    <property type="chains" value="A/B=21-184"/>
</dbReference>
<dbReference type="PDB" id="8R6A">
    <property type="method" value="X-ray"/>
    <property type="resolution" value="2.40 A"/>
    <property type="chains" value="A/B=21-184"/>
</dbReference>
<dbReference type="PDB" id="8R6B">
    <property type="method" value="X-ray"/>
    <property type="resolution" value="2.50 A"/>
    <property type="chains" value="A=21-184"/>
</dbReference>
<dbReference type="PDBsum" id="6Y5N"/>
<dbReference type="PDBsum" id="6Y5P"/>
<dbReference type="PDBsum" id="8R5N"/>
<dbReference type="PDBsum" id="8R6A"/>
<dbReference type="PDBsum" id="8R6B"/>
<dbReference type="SMR" id="Q86Y01"/>
<dbReference type="BioGRID" id="108173">
    <property type="interactions" value="31"/>
</dbReference>
<dbReference type="DIP" id="DIP-43904N"/>
<dbReference type="FunCoup" id="Q86Y01">
    <property type="interactions" value="933"/>
</dbReference>
<dbReference type="IntAct" id="Q86Y01">
    <property type="interactions" value="17"/>
</dbReference>
<dbReference type="MINT" id="Q86Y01"/>
<dbReference type="STRING" id="9606.ENSP00000257600"/>
<dbReference type="iPTMnet" id="Q86Y01"/>
<dbReference type="PhosphoSitePlus" id="Q86Y01"/>
<dbReference type="BioMuta" id="DTX1"/>
<dbReference type="DMDM" id="37077046"/>
<dbReference type="MassIVE" id="Q86Y01"/>
<dbReference type="PaxDb" id="9606-ENSP00000257600"/>
<dbReference type="PeptideAtlas" id="Q86Y01"/>
<dbReference type="ProteomicsDB" id="70344"/>
<dbReference type="Antibodypedia" id="45356">
    <property type="antibodies" value="219 antibodies from 31 providers"/>
</dbReference>
<dbReference type="DNASU" id="1840"/>
<dbReference type="Ensembl" id="ENST00000257600.3">
    <property type="protein sequence ID" value="ENSP00000257600.3"/>
    <property type="gene ID" value="ENSG00000135144.8"/>
</dbReference>
<dbReference type="Ensembl" id="ENST00000548759.2">
    <property type="protein sequence ID" value="ENSP00000510707.1"/>
    <property type="gene ID" value="ENSG00000135144.8"/>
</dbReference>
<dbReference type="GeneID" id="1840"/>
<dbReference type="KEGG" id="hsa:1840"/>
<dbReference type="MANE-Select" id="ENST00000548759.2">
    <property type="protein sequence ID" value="ENSP00000510707.1"/>
    <property type="RefSeq nucleotide sequence ID" value="NM_004416.3"/>
    <property type="RefSeq protein sequence ID" value="NP_004407.2"/>
</dbReference>
<dbReference type="UCSC" id="uc001tuk.2">
    <property type="organism name" value="human"/>
</dbReference>
<dbReference type="AGR" id="HGNC:3060"/>
<dbReference type="CTD" id="1840"/>
<dbReference type="DisGeNET" id="1840"/>
<dbReference type="GeneCards" id="DTX1"/>
<dbReference type="HGNC" id="HGNC:3060">
    <property type="gene designation" value="DTX1"/>
</dbReference>
<dbReference type="HPA" id="ENSG00000135144">
    <property type="expression patterns" value="Tissue enhanced (brain, lymphoid tissue)"/>
</dbReference>
<dbReference type="MalaCards" id="DTX1"/>
<dbReference type="MIM" id="602582">
    <property type="type" value="gene"/>
</dbReference>
<dbReference type="neXtProt" id="NX_Q86Y01"/>
<dbReference type="OpenTargets" id="ENSG00000135144"/>
<dbReference type="PharmGKB" id="PA27514"/>
<dbReference type="VEuPathDB" id="HostDB:ENSG00000135144"/>
<dbReference type="eggNOG" id="ENOG502QQ9M">
    <property type="taxonomic scope" value="Eukaryota"/>
</dbReference>
<dbReference type="GeneTree" id="ENSGT00940000160943"/>
<dbReference type="HOGENOM" id="CLU_030422_4_0_1"/>
<dbReference type="InParanoid" id="Q86Y01"/>
<dbReference type="OMA" id="FGYVIYF"/>
<dbReference type="OrthoDB" id="2449614at2759"/>
<dbReference type="PAN-GO" id="Q86Y01">
    <property type="GO annotations" value="4 GO annotations based on evolutionary models"/>
</dbReference>
<dbReference type="PhylomeDB" id="Q86Y01"/>
<dbReference type="TreeFam" id="TF325526"/>
<dbReference type="PathwayCommons" id="Q86Y01"/>
<dbReference type="Reactome" id="R-HSA-2122948">
    <property type="pathway name" value="Activated NOTCH1 Transmits Signal to the Nucleus"/>
</dbReference>
<dbReference type="SignaLink" id="Q86Y01"/>
<dbReference type="SIGNOR" id="Q86Y01"/>
<dbReference type="UniPathway" id="UPA00143"/>
<dbReference type="BioGRID-ORCS" id="1840">
    <property type="hits" value="5 hits in 1187 CRISPR screens"/>
</dbReference>
<dbReference type="ChiTaRS" id="DTX1">
    <property type="organism name" value="human"/>
</dbReference>
<dbReference type="GeneWiki" id="DTX1"/>
<dbReference type="GenomeRNAi" id="1840"/>
<dbReference type="Pharos" id="Q86Y01">
    <property type="development level" value="Tbio"/>
</dbReference>
<dbReference type="PRO" id="PR:Q86Y01"/>
<dbReference type="Proteomes" id="UP000005640">
    <property type="component" value="Chromosome 12"/>
</dbReference>
<dbReference type="RNAct" id="Q86Y01">
    <property type="molecule type" value="protein"/>
</dbReference>
<dbReference type="Bgee" id="ENSG00000135144">
    <property type="expression patterns" value="Expressed in cortical plate and 131 other cell types or tissues"/>
</dbReference>
<dbReference type="GO" id="GO:0005737">
    <property type="term" value="C:cytoplasm"/>
    <property type="evidence" value="ECO:0000304"/>
    <property type="project" value="ProtInc"/>
</dbReference>
<dbReference type="GO" id="GO:0005829">
    <property type="term" value="C:cytosol"/>
    <property type="evidence" value="ECO:0000314"/>
    <property type="project" value="HPA"/>
</dbReference>
<dbReference type="GO" id="GO:0016604">
    <property type="term" value="C:nuclear body"/>
    <property type="evidence" value="ECO:0000314"/>
    <property type="project" value="HPA"/>
</dbReference>
<dbReference type="GO" id="GO:0005654">
    <property type="term" value="C:nucleoplasm"/>
    <property type="evidence" value="ECO:0000314"/>
    <property type="project" value="HPA"/>
</dbReference>
<dbReference type="GO" id="GO:0005112">
    <property type="term" value="F:Notch binding"/>
    <property type="evidence" value="ECO:0000314"/>
    <property type="project" value="UniProtKB"/>
</dbReference>
<dbReference type="GO" id="GO:0017124">
    <property type="term" value="F:SH3 domain binding"/>
    <property type="evidence" value="ECO:0007669"/>
    <property type="project" value="UniProtKB-KW"/>
</dbReference>
<dbReference type="GO" id="GO:0003713">
    <property type="term" value="F:transcription coactivator activity"/>
    <property type="evidence" value="ECO:0000304"/>
    <property type="project" value="ProtInc"/>
</dbReference>
<dbReference type="GO" id="GO:0061630">
    <property type="term" value="F:ubiquitin protein ligase activity"/>
    <property type="evidence" value="ECO:0000318"/>
    <property type="project" value="GO_Central"/>
</dbReference>
<dbReference type="GO" id="GO:0031625">
    <property type="term" value="F:ubiquitin protein ligase binding"/>
    <property type="evidence" value="ECO:0000353"/>
    <property type="project" value="UniProtKB"/>
</dbReference>
<dbReference type="GO" id="GO:0008270">
    <property type="term" value="F:zinc ion binding"/>
    <property type="evidence" value="ECO:0007669"/>
    <property type="project" value="UniProtKB-KW"/>
</dbReference>
<dbReference type="GO" id="GO:0007166">
    <property type="term" value="P:cell surface receptor signaling pathway"/>
    <property type="evidence" value="ECO:0000304"/>
    <property type="project" value="ProtInc"/>
</dbReference>
<dbReference type="GO" id="GO:1990830">
    <property type="term" value="P:cellular response to leukemia inhibitory factor"/>
    <property type="evidence" value="ECO:0007669"/>
    <property type="project" value="Ensembl"/>
</dbReference>
<dbReference type="GO" id="GO:0006351">
    <property type="term" value="P:DNA-templated transcription"/>
    <property type="evidence" value="ECO:0000303"/>
    <property type="project" value="UniProtKB"/>
</dbReference>
<dbReference type="GO" id="GO:0010001">
    <property type="term" value="P:glial cell differentiation"/>
    <property type="evidence" value="ECO:0007669"/>
    <property type="project" value="Ensembl"/>
</dbReference>
<dbReference type="GO" id="GO:0045665">
    <property type="term" value="P:negative regulation of neuron differentiation"/>
    <property type="evidence" value="ECO:0000316"/>
    <property type="project" value="UniProtKB"/>
</dbReference>
<dbReference type="GO" id="GO:0045581">
    <property type="term" value="P:negative regulation of T cell differentiation"/>
    <property type="evidence" value="ECO:0007669"/>
    <property type="project" value="Ensembl"/>
</dbReference>
<dbReference type="GO" id="GO:0007219">
    <property type="term" value="P:Notch signaling pathway"/>
    <property type="evidence" value="ECO:0000318"/>
    <property type="project" value="GO_Central"/>
</dbReference>
<dbReference type="GO" id="GO:0016567">
    <property type="term" value="P:protein ubiquitination"/>
    <property type="evidence" value="ECO:0000318"/>
    <property type="project" value="GO_Central"/>
</dbReference>
<dbReference type="GO" id="GO:0008593">
    <property type="term" value="P:regulation of Notch signaling pathway"/>
    <property type="evidence" value="ECO:0000316"/>
    <property type="project" value="UniProtKB"/>
</dbReference>
<dbReference type="GO" id="GO:0030217">
    <property type="term" value="P:T cell differentiation"/>
    <property type="evidence" value="ECO:0007669"/>
    <property type="project" value="Ensembl"/>
</dbReference>
<dbReference type="GO" id="GO:0006366">
    <property type="term" value="P:transcription by RNA polymerase II"/>
    <property type="evidence" value="ECO:0000304"/>
    <property type="project" value="ProtInc"/>
</dbReference>
<dbReference type="CDD" id="cd09633">
    <property type="entry name" value="Deltex_C"/>
    <property type="match status" value="1"/>
</dbReference>
<dbReference type="CDD" id="cd16671">
    <property type="entry name" value="RING-H2_DTX1_4"/>
    <property type="match status" value="1"/>
</dbReference>
<dbReference type="FunFam" id="3.30.40.10:FF:000097">
    <property type="entry name" value="E3 ubiquitin-protein ligase DTX4"/>
    <property type="match status" value="1"/>
</dbReference>
<dbReference type="FunFam" id="3.30.720.50:FF:000004">
    <property type="entry name" value="Probable E3 ubiquitin-protein ligase DTX2"/>
    <property type="match status" value="1"/>
</dbReference>
<dbReference type="FunFam" id="3.30.720.50:FF:000005">
    <property type="entry name" value="Probable E3 ubiquitin-protein ligase DTX2"/>
    <property type="match status" value="1"/>
</dbReference>
<dbReference type="FunFam" id="3.30.390.130:FF:000001">
    <property type="entry name" value="Probable E3 ubiquitin-protein ligase DTX3"/>
    <property type="match status" value="1"/>
</dbReference>
<dbReference type="Gene3D" id="3.30.390.130">
    <property type="match status" value="1"/>
</dbReference>
<dbReference type="Gene3D" id="3.30.720.50">
    <property type="match status" value="2"/>
</dbReference>
<dbReference type="Gene3D" id="3.30.40.10">
    <property type="entry name" value="Zinc/RING finger domain, C3HC4 (zinc finger)"/>
    <property type="match status" value="1"/>
</dbReference>
<dbReference type="InterPro" id="IPR039396">
    <property type="entry name" value="Deltex_C"/>
</dbReference>
<dbReference type="InterPro" id="IPR039399">
    <property type="entry name" value="Deltex_C_sf"/>
</dbReference>
<dbReference type="InterPro" id="IPR039398">
    <property type="entry name" value="Deltex_fam"/>
</dbReference>
<dbReference type="InterPro" id="IPR018123">
    <property type="entry name" value="WWE-dom_subgr"/>
</dbReference>
<dbReference type="InterPro" id="IPR004170">
    <property type="entry name" value="WWE_dom"/>
</dbReference>
<dbReference type="InterPro" id="IPR037197">
    <property type="entry name" value="WWE_dom_sf"/>
</dbReference>
<dbReference type="InterPro" id="IPR001841">
    <property type="entry name" value="Znf_RING"/>
</dbReference>
<dbReference type="InterPro" id="IPR013083">
    <property type="entry name" value="Znf_RING/FYVE/PHD"/>
</dbReference>
<dbReference type="PANTHER" id="PTHR12622">
    <property type="entry name" value="DELTEX-RELATED"/>
    <property type="match status" value="1"/>
</dbReference>
<dbReference type="Pfam" id="PF18102">
    <property type="entry name" value="DTC"/>
    <property type="match status" value="1"/>
</dbReference>
<dbReference type="Pfam" id="PF02825">
    <property type="entry name" value="WWE"/>
    <property type="match status" value="2"/>
</dbReference>
<dbReference type="SMART" id="SM00184">
    <property type="entry name" value="RING"/>
    <property type="match status" value="1"/>
</dbReference>
<dbReference type="SMART" id="SM00678">
    <property type="entry name" value="WWE"/>
    <property type="match status" value="2"/>
</dbReference>
<dbReference type="SUPFAM" id="SSF57850">
    <property type="entry name" value="RING/U-box"/>
    <property type="match status" value="1"/>
</dbReference>
<dbReference type="SUPFAM" id="SSF117839">
    <property type="entry name" value="WWE domain"/>
    <property type="match status" value="2"/>
</dbReference>
<dbReference type="PROSITE" id="PS50918">
    <property type="entry name" value="WWE"/>
    <property type="match status" value="2"/>
</dbReference>
<dbReference type="PROSITE" id="PS50089">
    <property type="entry name" value="ZF_RING_2"/>
    <property type="match status" value="1"/>
</dbReference>
<organism>
    <name type="scientific">Homo sapiens</name>
    <name type="common">Human</name>
    <dbReference type="NCBI Taxonomy" id="9606"/>
    <lineage>
        <taxon>Eukaryota</taxon>
        <taxon>Metazoa</taxon>
        <taxon>Chordata</taxon>
        <taxon>Craniata</taxon>
        <taxon>Vertebrata</taxon>
        <taxon>Euteleostomi</taxon>
        <taxon>Mammalia</taxon>
        <taxon>Eutheria</taxon>
        <taxon>Euarchontoglires</taxon>
        <taxon>Primates</taxon>
        <taxon>Haplorrhini</taxon>
        <taxon>Catarrhini</taxon>
        <taxon>Hominidae</taxon>
        <taxon>Homo</taxon>
    </lineage>
</organism>
<accession>Q86Y01</accession>
<accession>O60630</accession>
<accession>Q9BS04</accession>
<gene>
    <name type="primary">DTX1</name>
</gene>
<proteinExistence type="evidence at protein level"/>
<protein>
    <recommendedName>
        <fullName>E3 ubiquitin-protein ligase DTX1</fullName>
        <ecNumber evidence="2">2.3.2.27</ecNumber>
    </recommendedName>
    <alternativeName>
        <fullName>Protein deltex-1</fullName>
        <shortName>Deltex1</shortName>
        <shortName>hDTX1</shortName>
    </alternativeName>
    <alternativeName>
        <fullName evidence="14">RING-type E3 ubiquitin transferase DTX1</fullName>
    </alternativeName>
</protein>
<keyword id="KW-0002">3D-structure</keyword>
<keyword id="KW-0963">Cytoplasm</keyword>
<keyword id="KW-0479">Metal-binding</keyword>
<keyword id="KW-0914">Notch signaling pathway</keyword>
<keyword id="KW-0539">Nucleus</keyword>
<keyword id="KW-1267">Proteomics identification</keyword>
<keyword id="KW-1185">Reference proteome</keyword>
<keyword id="KW-0677">Repeat</keyword>
<keyword id="KW-0729">SH3-binding</keyword>
<keyword id="KW-0808">Transferase</keyword>
<keyword id="KW-0832">Ubl conjugation</keyword>
<keyword id="KW-0862">Zinc</keyword>
<keyword id="KW-0863">Zinc-finger</keyword>
<comment type="function">
    <text evidence="1 7 8 13">Functions as a ubiquitin ligase protein in vivo, mediating ubiquitination and promoting degradation of MEKK1, suggesting that it may regulate the Notch pathway via some ubiquitin ligase activity (By similarity). Regulator of Notch signaling, a signaling pathway involved in cell-cell communications that regulates a broad spectrum of cell-fate determinations. Mainly acts as a positive regulator of Notch, but it also acts as a negative regulator, depending on the developmental and cell context. Mediates the antineural activity of Notch, possibly by inhibiting the transcriptional activation mediated by MATCH1. Involved in neurogenesis, lymphogenesis and myogenesis, and may also be involved in MZB (Marginal zone B) cell differentiation. Promotes B-cell development at the expense of T-cell development, suggesting that it can antagonize NOTCH1.</text>
</comment>
<comment type="catalytic activity">
    <reaction evidence="2">
        <text>S-ubiquitinyl-[E2 ubiquitin-conjugating enzyme]-L-cysteine + [acceptor protein]-L-lysine = [E2 ubiquitin-conjugating enzyme]-L-cysteine + N(6)-ubiquitinyl-[acceptor protein]-L-lysine.</text>
        <dbReference type="EC" id="2.3.2.27"/>
    </reaction>
</comment>
<comment type="pathway">
    <text>Protein modification; protein ubiquitination.</text>
</comment>
<comment type="subunit">
    <text evidence="7 9 11 12 13">Homodimer. May form a heterodimer with other members of the Deltex family. Interacts with NOTCH1 via its N-terminal region and EIF3F, the interaction is required for NOTCH1 deubiquitination. Interacts with EP300. Forms a heterodimer with BBAP; the heterodimerization leading to an increase of in vitro ubiquitin ligase activity. Interacts with ITCH.</text>
</comment>
<comment type="interaction">
    <interactant intactId="EBI-1755174">
        <id>Q86Y01</id>
    </interactant>
    <interactant intactId="EBI-476431">
        <id>P10644</id>
        <label>PRKAR1A</label>
    </interactant>
    <organismsDiffer>false</organismsDiffer>
    <experiments>3</experiments>
</comment>
<comment type="interaction">
    <interactant intactId="EBI-1755174">
        <id>Q86Y01</id>
    </interactant>
    <interactant intactId="EBI-3390054">
        <id>P0CG48</id>
        <label>UBC</label>
    </interactant>
    <organismsDiffer>false</organismsDiffer>
    <experiments>2</experiments>
</comment>
<comment type="interaction">
    <interactant intactId="EBI-1755174">
        <id>Q86Y01</id>
    </interactant>
    <interactant intactId="EBI-1634316">
        <id>Q9DCH4</id>
        <label>Eif3f</label>
    </interactant>
    <organismsDiffer>true</organismsDiffer>
    <experiments>9</experiments>
</comment>
<comment type="subcellular location">
    <subcellularLocation>
        <location>Cytoplasm</location>
    </subcellularLocation>
    <subcellularLocation>
        <location>Nucleus</location>
    </subcellularLocation>
    <text>Predominantly cytoplasmic. Associates with endocytic vesicles. Partially nuclear.</text>
</comment>
<comment type="tissue specificity">
    <text evidence="10 13">Widely expressed. Strongly expressed in blood vessel. Also expressed in embryonic nervous system, pancreas, lung, adrenal gland, digestive tube and muscles. Expressed in MZB cells and developing B- and T-cells.</text>
</comment>
<comment type="induction">
    <text evidence="10">Regulated by NOTCH2.</text>
</comment>
<comment type="domain">
    <text evidence="1">The WWE domains are thought to mediate some protein-protein interaction, and are frequently found in ubiquitin ligases.</text>
</comment>
<comment type="PTM">
    <text evidence="11">Ubiquitinated; undergoes 'Lys-29'-linked polyubiquitination catalyzed by ITCH.</text>
</comment>
<comment type="similarity">
    <text evidence="14">Belongs to the Deltex family.</text>
</comment>